<name>HLDE_ECOHS</name>
<evidence type="ECO:0000255" key="1">
    <source>
        <dbReference type="HAMAP-Rule" id="MF_01603"/>
    </source>
</evidence>
<proteinExistence type="inferred from homology"/>
<accession>A8A4K6</accession>
<feature type="chain" id="PRO_0000323489" description="Bifunctional protein HldE">
    <location>
        <begin position="1"/>
        <end position="477"/>
    </location>
</feature>
<feature type="region of interest" description="Ribokinase">
    <location>
        <begin position="1"/>
        <end position="318"/>
    </location>
</feature>
<feature type="region of interest" description="Cytidylyltransferase">
    <location>
        <begin position="344"/>
        <end position="477"/>
    </location>
</feature>
<feature type="active site" evidence="1">
    <location>
        <position position="264"/>
    </location>
</feature>
<feature type="binding site" evidence="1">
    <location>
        <begin position="195"/>
        <end position="198"/>
    </location>
    <ligand>
        <name>ATP</name>
        <dbReference type="ChEBI" id="CHEBI:30616"/>
    </ligand>
</feature>
<feature type="modified residue" description="N6-acetyllysine" evidence="1">
    <location>
        <position position="179"/>
    </location>
</feature>
<protein>
    <recommendedName>
        <fullName evidence="1">Bifunctional protein HldE</fullName>
    </recommendedName>
    <domain>
        <recommendedName>
            <fullName evidence="1">D-beta-D-heptose 7-phosphate kinase</fullName>
            <ecNumber evidence="1">2.7.1.167</ecNumber>
        </recommendedName>
        <alternativeName>
            <fullName evidence="1">D-beta-D-heptose 7-phosphotransferase</fullName>
        </alternativeName>
        <alternativeName>
            <fullName evidence="1">D-glycero-beta-D-manno-heptose-7-phosphate kinase</fullName>
        </alternativeName>
    </domain>
    <domain>
        <recommendedName>
            <fullName evidence="1">D-beta-D-heptose 1-phosphate adenylyltransferase</fullName>
            <ecNumber evidence="1">2.7.7.70</ecNumber>
        </recommendedName>
        <alternativeName>
            <fullName evidence="1">D-glycero-beta-D-manno-heptose 1-phosphate adenylyltransferase</fullName>
        </alternativeName>
    </domain>
</protein>
<reference key="1">
    <citation type="journal article" date="2008" name="J. Bacteriol.">
        <title>The pangenome structure of Escherichia coli: comparative genomic analysis of E. coli commensal and pathogenic isolates.</title>
        <authorList>
            <person name="Rasko D.A."/>
            <person name="Rosovitz M.J."/>
            <person name="Myers G.S.A."/>
            <person name="Mongodin E.F."/>
            <person name="Fricke W.F."/>
            <person name="Gajer P."/>
            <person name="Crabtree J."/>
            <person name="Sebaihia M."/>
            <person name="Thomson N.R."/>
            <person name="Chaudhuri R."/>
            <person name="Henderson I.R."/>
            <person name="Sperandio V."/>
            <person name="Ravel J."/>
        </authorList>
    </citation>
    <scope>NUCLEOTIDE SEQUENCE [LARGE SCALE GENOMIC DNA]</scope>
    <source>
        <strain>HS</strain>
    </source>
</reference>
<organism>
    <name type="scientific">Escherichia coli O9:H4 (strain HS)</name>
    <dbReference type="NCBI Taxonomy" id="331112"/>
    <lineage>
        <taxon>Bacteria</taxon>
        <taxon>Pseudomonadati</taxon>
        <taxon>Pseudomonadota</taxon>
        <taxon>Gammaproteobacteria</taxon>
        <taxon>Enterobacterales</taxon>
        <taxon>Enterobacteriaceae</taxon>
        <taxon>Escherichia</taxon>
    </lineage>
</organism>
<comment type="function">
    <text evidence="1">Catalyzes the phosphorylation of D-glycero-D-manno-heptose 7-phosphate at the C-1 position to selectively form D-glycero-beta-D-manno-heptose-1,7-bisphosphate.</text>
</comment>
<comment type="function">
    <text evidence="1">Catalyzes the ADP transfer from ATP to D-glycero-beta-D-manno-heptose 1-phosphate, yielding ADP-D-glycero-beta-D-manno-heptose.</text>
</comment>
<comment type="catalytic activity">
    <reaction evidence="1">
        <text>D-glycero-beta-D-manno-heptose 7-phosphate + ATP = D-glycero-beta-D-manno-heptose 1,7-bisphosphate + ADP + H(+)</text>
        <dbReference type="Rhea" id="RHEA:27473"/>
        <dbReference type="ChEBI" id="CHEBI:15378"/>
        <dbReference type="ChEBI" id="CHEBI:30616"/>
        <dbReference type="ChEBI" id="CHEBI:60204"/>
        <dbReference type="ChEBI" id="CHEBI:60208"/>
        <dbReference type="ChEBI" id="CHEBI:456216"/>
        <dbReference type="EC" id="2.7.1.167"/>
    </reaction>
</comment>
<comment type="catalytic activity">
    <reaction evidence="1">
        <text>D-glycero-beta-D-manno-heptose 1-phosphate + ATP + H(+) = ADP-D-glycero-beta-D-manno-heptose + diphosphate</text>
        <dbReference type="Rhea" id="RHEA:27465"/>
        <dbReference type="ChEBI" id="CHEBI:15378"/>
        <dbReference type="ChEBI" id="CHEBI:30616"/>
        <dbReference type="ChEBI" id="CHEBI:33019"/>
        <dbReference type="ChEBI" id="CHEBI:59967"/>
        <dbReference type="ChEBI" id="CHEBI:61593"/>
        <dbReference type="EC" id="2.7.7.70"/>
    </reaction>
</comment>
<comment type="pathway">
    <text evidence="1">Nucleotide-sugar biosynthesis; ADP-L-glycero-beta-D-manno-heptose biosynthesis; ADP-L-glycero-beta-D-manno-heptose from D-glycero-beta-D-manno-heptose 7-phosphate: step 1/4.</text>
</comment>
<comment type="pathway">
    <text evidence="1">Nucleotide-sugar biosynthesis; ADP-L-glycero-beta-D-manno-heptose biosynthesis; ADP-L-glycero-beta-D-manno-heptose from D-glycero-beta-D-manno-heptose 7-phosphate: step 3/4.</text>
</comment>
<comment type="subunit">
    <text evidence="1">Homodimer.</text>
</comment>
<comment type="similarity">
    <text evidence="1">In the N-terminal section; belongs to the carbohydrate kinase PfkB family.</text>
</comment>
<comment type="similarity">
    <text evidence="1">In the C-terminal section; belongs to the cytidylyltransferase family.</text>
</comment>
<sequence>MKVTLPEFERAGVMVVGDVMLDRYWYGPTSRISPEAPVPVVKVNTIEERPGGAANVAMNIASLGANARLVGLTGIDDAARALSKSLADVNVKCDFVSVPTHPTITKLRVLSRNQQLIRLDFEEGFEGVDPQPLHERINQALSSIGALVLSDYAKGALASVQQMIQLARKAGVPVLIDPKSTDFERYRGATLLTPNLSEFEAVVGKCKTEEEIVERGMKLIADYELSALLVTRSEQGMSLLQPGKAPLHMPTQAQEVYDVTGAGDTVIGVLAATLAAGNSLEEACFFANAAAGVVVGKLGTSTVSPIELENAVRGRADTGFGVMTEEELKLAVAAARKRGEKVVMTNGVFDILHAGHVSYLANARKLGDRLIVAVNSDASTKRLKGDSRPVNPLEQRMIVLGALEAVDWVVSFEEDTPQRLIAGILPDLLVKGGDYKPEEIAGSKEVWANGGEVLVLNFEDGCSTTNIIKKIQQDKKG</sequence>
<gene>
    <name evidence="1" type="primary">hldE</name>
    <name type="ordered locus">EcHS_A3229</name>
</gene>
<keyword id="KW-0007">Acetylation</keyword>
<keyword id="KW-0067">ATP-binding</keyword>
<keyword id="KW-0119">Carbohydrate metabolism</keyword>
<keyword id="KW-0418">Kinase</keyword>
<keyword id="KW-0511">Multifunctional enzyme</keyword>
<keyword id="KW-0547">Nucleotide-binding</keyword>
<keyword id="KW-0548">Nucleotidyltransferase</keyword>
<keyword id="KW-0808">Transferase</keyword>
<dbReference type="EC" id="2.7.1.167" evidence="1"/>
<dbReference type="EC" id="2.7.7.70" evidence="1"/>
<dbReference type="EMBL" id="CP000802">
    <property type="protein sequence ID" value="ABV07460.1"/>
    <property type="molecule type" value="Genomic_DNA"/>
</dbReference>
<dbReference type="RefSeq" id="WP_000869191.1">
    <property type="nucleotide sequence ID" value="NC_009800.1"/>
</dbReference>
<dbReference type="SMR" id="A8A4K6"/>
<dbReference type="KEGG" id="ecx:EcHS_A3229"/>
<dbReference type="HOGENOM" id="CLU_021150_2_1_6"/>
<dbReference type="UniPathway" id="UPA00356">
    <property type="reaction ID" value="UER00437"/>
</dbReference>
<dbReference type="UniPathway" id="UPA00356">
    <property type="reaction ID" value="UER00439"/>
</dbReference>
<dbReference type="GO" id="GO:0005829">
    <property type="term" value="C:cytosol"/>
    <property type="evidence" value="ECO:0007669"/>
    <property type="project" value="TreeGrafter"/>
</dbReference>
<dbReference type="GO" id="GO:0005524">
    <property type="term" value="F:ATP binding"/>
    <property type="evidence" value="ECO:0007669"/>
    <property type="project" value="UniProtKB-UniRule"/>
</dbReference>
<dbReference type="GO" id="GO:0033785">
    <property type="term" value="F:heptose 7-phosphate kinase activity"/>
    <property type="evidence" value="ECO:0007669"/>
    <property type="project" value="UniProtKB-UniRule"/>
</dbReference>
<dbReference type="GO" id="GO:0033786">
    <property type="term" value="F:heptose-1-phosphate adenylyltransferase activity"/>
    <property type="evidence" value="ECO:0007669"/>
    <property type="project" value="UniProtKB-UniRule"/>
</dbReference>
<dbReference type="GO" id="GO:0016773">
    <property type="term" value="F:phosphotransferase activity, alcohol group as acceptor"/>
    <property type="evidence" value="ECO:0007669"/>
    <property type="project" value="InterPro"/>
</dbReference>
<dbReference type="GO" id="GO:0097171">
    <property type="term" value="P:ADP-L-glycero-beta-D-manno-heptose biosynthetic process"/>
    <property type="evidence" value="ECO:0007669"/>
    <property type="project" value="UniProtKB-UniPathway"/>
</dbReference>
<dbReference type="CDD" id="cd01172">
    <property type="entry name" value="RfaE_like"/>
    <property type="match status" value="1"/>
</dbReference>
<dbReference type="FunFam" id="3.40.1190.20:FF:000002">
    <property type="entry name" value="Bifunctional protein HldE"/>
    <property type="match status" value="1"/>
</dbReference>
<dbReference type="FunFam" id="3.40.50.620:FF:000028">
    <property type="entry name" value="Bifunctional protein HldE"/>
    <property type="match status" value="1"/>
</dbReference>
<dbReference type="Gene3D" id="3.40.1190.20">
    <property type="match status" value="1"/>
</dbReference>
<dbReference type="Gene3D" id="3.40.50.620">
    <property type="entry name" value="HUPs"/>
    <property type="match status" value="1"/>
</dbReference>
<dbReference type="HAMAP" id="MF_01603">
    <property type="entry name" value="HldE"/>
    <property type="match status" value="1"/>
</dbReference>
<dbReference type="InterPro" id="IPR023030">
    <property type="entry name" value="Bifunc_HldE"/>
</dbReference>
<dbReference type="InterPro" id="IPR002173">
    <property type="entry name" value="Carboh/pur_kinase_PfkB_CS"/>
</dbReference>
<dbReference type="InterPro" id="IPR004821">
    <property type="entry name" value="Cyt_trans-like"/>
</dbReference>
<dbReference type="InterPro" id="IPR011611">
    <property type="entry name" value="PfkB_dom"/>
</dbReference>
<dbReference type="InterPro" id="IPR011913">
    <property type="entry name" value="RfaE_dom_I"/>
</dbReference>
<dbReference type="InterPro" id="IPR011914">
    <property type="entry name" value="RfaE_dom_II"/>
</dbReference>
<dbReference type="InterPro" id="IPR029056">
    <property type="entry name" value="Ribokinase-like"/>
</dbReference>
<dbReference type="InterPro" id="IPR014729">
    <property type="entry name" value="Rossmann-like_a/b/a_fold"/>
</dbReference>
<dbReference type="NCBIfam" id="TIGR00125">
    <property type="entry name" value="cyt_tran_rel"/>
    <property type="match status" value="1"/>
</dbReference>
<dbReference type="NCBIfam" id="NF008454">
    <property type="entry name" value="PRK11316.1"/>
    <property type="match status" value="1"/>
</dbReference>
<dbReference type="NCBIfam" id="TIGR02198">
    <property type="entry name" value="rfaE_dom_I"/>
    <property type="match status" value="1"/>
</dbReference>
<dbReference type="NCBIfam" id="TIGR02199">
    <property type="entry name" value="rfaE_dom_II"/>
    <property type="match status" value="1"/>
</dbReference>
<dbReference type="PANTHER" id="PTHR46969">
    <property type="entry name" value="BIFUNCTIONAL PROTEIN HLDE"/>
    <property type="match status" value="1"/>
</dbReference>
<dbReference type="PANTHER" id="PTHR46969:SF1">
    <property type="entry name" value="BIFUNCTIONAL PROTEIN HLDE"/>
    <property type="match status" value="1"/>
</dbReference>
<dbReference type="Pfam" id="PF01467">
    <property type="entry name" value="CTP_transf_like"/>
    <property type="match status" value="1"/>
</dbReference>
<dbReference type="Pfam" id="PF00294">
    <property type="entry name" value="PfkB"/>
    <property type="match status" value="1"/>
</dbReference>
<dbReference type="SUPFAM" id="SSF52374">
    <property type="entry name" value="Nucleotidylyl transferase"/>
    <property type="match status" value="1"/>
</dbReference>
<dbReference type="SUPFAM" id="SSF53613">
    <property type="entry name" value="Ribokinase-like"/>
    <property type="match status" value="1"/>
</dbReference>
<dbReference type="PROSITE" id="PS00583">
    <property type="entry name" value="PFKB_KINASES_1"/>
    <property type="match status" value="1"/>
</dbReference>